<accession>P26251</accession>
<accession>A8IIS3</accession>
<feature type="chain" id="PRO_0000139486" description="Nitrogenase iron protein 1">
    <location>
        <begin position="1"/>
        <end position="296"/>
    </location>
</feature>
<feature type="binding site" evidence="2">
    <location>
        <begin position="11"/>
        <end position="18"/>
    </location>
    <ligand>
        <name>ATP</name>
        <dbReference type="ChEBI" id="CHEBI:30616"/>
    </ligand>
</feature>
<feature type="binding site" evidence="1">
    <location>
        <position position="99"/>
    </location>
    <ligand>
        <name>[4Fe-4S] cluster</name>
        <dbReference type="ChEBI" id="CHEBI:49883"/>
        <note>ligand shared between dimeric partners</note>
    </ligand>
</feature>
<feature type="binding site" evidence="1">
    <location>
        <position position="133"/>
    </location>
    <ligand>
        <name>[4Fe-4S] cluster</name>
        <dbReference type="ChEBI" id="CHEBI:49883"/>
        <note>ligand shared between dimeric partners</note>
    </ligand>
</feature>
<feature type="modified residue" description="ADP-ribosylarginine; by dinitrogenase reductase ADP-ribosyltransferase" evidence="1">
    <location>
        <position position="102"/>
    </location>
</feature>
<protein>
    <recommendedName>
        <fullName>Nitrogenase iron protein 1</fullName>
        <ecNumber>1.18.6.1</ecNumber>
    </recommendedName>
    <alternativeName>
        <fullName>Nitrogenase Fe protein 1</fullName>
    </alternativeName>
    <alternativeName>
        <fullName>Nitrogenase component II</fullName>
    </alternativeName>
    <alternativeName>
        <fullName>Nitrogenase reductase</fullName>
    </alternativeName>
</protein>
<evidence type="ECO:0000250" key="1"/>
<evidence type="ECO:0000255" key="2"/>
<evidence type="ECO:0000305" key="3"/>
<keyword id="KW-0004">4Fe-4S</keyword>
<keyword id="KW-0013">ADP-ribosylation</keyword>
<keyword id="KW-0067">ATP-binding</keyword>
<keyword id="KW-0408">Iron</keyword>
<keyword id="KW-0411">Iron-sulfur</keyword>
<keyword id="KW-0479">Metal-binding</keyword>
<keyword id="KW-0535">Nitrogen fixation</keyword>
<keyword id="KW-0547">Nucleotide-binding</keyword>
<keyword id="KW-0560">Oxidoreductase</keyword>
<keyword id="KW-1185">Reference proteome</keyword>
<gene>
    <name type="primary">nifH1</name>
    <name type="ordered locus">AZC_3443</name>
</gene>
<name>NIFH1_AZOC5</name>
<proteinExistence type="inferred from homology"/>
<comment type="function">
    <text evidence="1">The key enzymatic reactions in nitrogen fixation are catalyzed by the nitrogenase complex, which has 2 components: the iron protein and the molybdenum-iron protein.</text>
</comment>
<comment type="catalytic activity">
    <reaction>
        <text>N2 + 8 reduced [2Fe-2S]-[ferredoxin] + 16 ATP + 16 H2O = H2 + 8 oxidized [2Fe-2S]-[ferredoxin] + 2 NH4(+) + 16 ADP + 16 phosphate + 6 H(+)</text>
        <dbReference type="Rhea" id="RHEA:21448"/>
        <dbReference type="Rhea" id="RHEA-COMP:10000"/>
        <dbReference type="Rhea" id="RHEA-COMP:10001"/>
        <dbReference type="ChEBI" id="CHEBI:15377"/>
        <dbReference type="ChEBI" id="CHEBI:15378"/>
        <dbReference type="ChEBI" id="CHEBI:17997"/>
        <dbReference type="ChEBI" id="CHEBI:18276"/>
        <dbReference type="ChEBI" id="CHEBI:28938"/>
        <dbReference type="ChEBI" id="CHEBI:30616"/>
        <dbReference type="ChEBI" id="CHEBI:33737"/>
        <dbReference type="ChEBI" id="CHEBI:33738"/>
        <dbReference type="ChEBI" id="CHEBI:43474"/>
        <dbReference type="ChEBI" id="CHEBI:456216"/>
        <dbReference type="EC" id="1.18.6.1"/>
    </reaction>
</comment>
<comment type="cofactor">
    <cofactor evidence="1">
        <name>[4Fe-4S] cluster</name>
        <dbReference type="ChEBI" id="CHEBI:49883"/>
    </cofactor>
    <text evidence="1">Binds 1 [4Fe-4S] cluster per dimer.</text>
</comment>
<comment type="subunit">
    <text evidence="1">Homodimer.</text>
</comment>
<comment type="PTM">
    <text evidence="1">The reversible ADP-ribosylation of Arg-102 inactivates the nitrogenase reductase and regulates nitrogenase activity.</text>
</comment>
<comment type="similarity">
    <text evidence="3">Belongs to the NifH/BchL/ChlL family.</text>
</comment>
<organism>
    <name type="scientific">Azorhizobium caulinodans (strain ATCC 43989 / DSM 5975 / JCM 20966 / LMG 6465 / NBRC 14845 / NCIMB 13405 / ORS 571)</name>
    <dbReference type="NCBI Taxonomy" id="438753"/>
    <lineage>
        <taxon>Bacteria</taxon>
        <taxon>Pseudomonadati</taxon>
        <taxon>Pseudomonadota</taxon>
        <taxon>Alphaproteobacteria</taxon>
        <taxon>Hyphomicrobiales</taxon>
        <taxon>Xanthobacteraceae</taxon>
        <taxon>Azorhizobium</taxon>
    </lineage>
</organism>
<dbReference type="EC" id="1.18.6.1"/>
<dbReference type="EMBL" id="M16709">
    <property type="protein sequence ID" value="AAA26316.1"/>
    <property type="molecule type" value="Genomic_DNA"/>
</dbReference>
<dbReference type="EMBL" id="AP009384">
    <property type="protein sequence ID" value="BAF89441.1"/>
    <property type="molecule type" value="Genomic_DNA"/>
</dbReference>
<dbReference type="PIR" id="B47622">
    <property type="entry name" value="B47622"/>
</dbReference>
<dbReference type="SMR" id="P26251"/>
<dbReference type="STRING" id="438753.AZC_3443"/>
<dbReference type="KEGG" id="azc:AZC_3443"/>
<dbReference type="eggNOG" id="COG1348">
    <property type="taxonomic scope" value="Bacteria"/>
</dbReference>
<dbReference type="HOGENOM" id="CLU_059373_0_0_5"/>
<dbReference type="Proteomes" id="UP000000270">
    <property type="component" value="Chromosome"/>
</dbReference>
<dbReference type="GO" id="GO:0051539">
    <property type="term" value="F:4 iron, 4 sulfur cluster binding"/>
    <property type="evidence" value="ECO:0007669"/>
    <property type="project" value="UniProtKB-KW"/>
</dbReference>
<dbReference type="GO" id="GO:0005524">
    <property type="term" value="F:ATP binding"/>
    <property type="evidence" value="ECO:0007669"/>
    <property type="project" value="UniProtKB-UniRule"/>
</dbReference>
<dbReference type="GO" id="GO:0046872">
    <property type="term" value="F:metal ion binding"/>
    <property type="evidence" value="ECO:0007669"/>
    <property type="project" value="UniProtKB-KW"/>
</dbReference>
<dbReference type="GO" id="GO:0016163">
    <property type="term" value="F:nitrogenase activity"/>
    <property type="evidence" value="ECO:0007669"/>
    <property type="project" value="UniProtKB-UniRule"/>
</dbReference>
<dbReference type="GO" id="GO:0009399">
    <property type="term" value="P:nitrogen fixation"/>
    <property type="evidence" value="ECO:0007669"/>
    <property type="project" value="UniProtKB-UniRule"/>
</dbReference>
<dbReference type="CDD" id="cd02040">
    <property type="entry name" value="NifH"/>
    <property type="match status" value="1"/>
</dbReference>
<dbReference type="FunFam" id="3.40.50.300:FF:001379">
    <property type="entry name" value="Nitrogenase iron protein 1"/>
    <property type="match status" value="1"/>
</dbReference>
<dbReference type="Gene3D" id="3.40.50.300">
    <property type="entry name" value="P-loop containing nucleotide triphosphate hydrolases"/>
    <property type="match status" value="1"/>
</dbReference>
<dbReference type="HAMAP" id="MF_00533">
    <property type="entry name" value="NifH"/>
    <property type="match status" value="1"/>
</dbReference>
<dbReference type="InterPro" id="IPR030655">
    <property type="entry name" value="NifH/chlL_CS"/>
</dbReference>
<dbReference type="InterPro" id="IPR000392">
    <property type="entry name" value="NifH/frxC"/>
</dbReference>
<dbReference type="InterPro" id="IPR005977">
    <property type="entry name" value="Nitrogenase_Fe_NifH"/>
</dbReference>
<dbReference type="InterPro" id="IPR027417">
    <property type="entry name" value="P-loop_NTPase"/>
</dbReference>
<dbReference type="NCBIfam" id="TIGR01287">
    <property type="entry name" value="nifH"/>
    <property type="match status" value="1"/>
</dbReference>
<dbReference type="PANTHER" id="PTHR42864">
    <property type="entry name" value="LIGHT-INDEPENDENT PROTOCHLOROPHYLLIDE REDUCTASE IRON-SULFUR ATP-BINDING PROTEIN"/>
    <property type="match status" value="1"/>
</dbReference>
<dbReference type="PANTHER" id="PTHR42864:SF2">
    <property type="entry name" value="LIGHT-INDEPENDENT PROTOCHLOROPHYLLIDE REDUCTASE IRON-SULFUR ATP-BINDING PROTEIN"/>
    <property type="match status" value="1"/>
</dbReference>
<dbReference type="Pfam" id="PF00142">
    <property type="entry name" value="Fer4_NifH"/>
    <property type="match status" value="1"/>
</dbReference>
<dbReference type="PIRSF" id="PIRSF000363">
    <property type="entry name" value="Nitrogenase_iron"/>
    <property type="match status" value="1"/>
</dbReference>
<dbReference type="PRINTS" id="PR00091">
    <property type="entry name" value="NITROGNASEII"/>
</dbReference>
<dbReference type="SUPFAM" id="SSF52540">
    <property type="entry name" value="P-loop containing nucleoside triphosphate hydrolases"/>
    <property type="match status" value="1"/>
</dbReference>
<dbReference type="PROSITE" id="PS00746">
    <property type="entry name" value="NIFH_FRXC_1"/>
    <property type="match status" value="1"/>
</dbReference>
<dbReference type="PROSITE" id="PS00692">
    <property type="entry name" value="NIFH_FRXC_2"/>
    <property type="match status" value="1"/>
</dbReference>
<dbReference type="PROSITE" id="PS51026">
    <property type="entry name" value="NIFH_FRXC_3"/>
    <property type="match status" value="1"/>
</dbReference>
<sequence>MSSLRQIAFYGKGGIGKSTTSQNTLAALAEMGHRILIVGCDPKADSTRLILHAKAQDTILSLAAAAGSVEDLELEEVMKIGYRDIRCVESGGPEPGVGCAGRGVITSINFLEENGAYEDIDYVSYDVLGDVVCGGFAMPIRENKAQEIYIVMSGEMMAMYAANNISKGILKYANSGGVRLGGLVCNERQTDKELELAENLAKKLGTQLIYFVPRDNIVQHAELRRMTVIEYAPDSVQANHYRNLAERVHNNGGKGIIPTPITMDELEDMLMEHGIMKTVDETQVGKTAAELAALSA</sequence>
<reference key="1">
    <citation type="journal article" date="1987" name="J. Gen. Microbiol.">
        <title>Nucleotide sequence and functional analysis of the two nifH copies of Rhizobium ORS571.</title>
        <authorList>
            <person name="Norel F."/>
            <person name="Elmerich C."/>
        </authorList>
    </citation>
    <scope>NUCLEOTIDE SEQUENCE [GENOMIC DNA]</scope>
</reference>
<reference key="2">
    <citation type="submission" date="2007-04" db="EMBL/GenBank/DDBJ databases">
        <title>Complete genome sequence of the nitrogen-fixing bacterium Azorhizobium caulinodans ORS571.</title>
        <authorList>
            <person name="Lee K.B."/>
            <person name="Backer P.D."/>
            <person name="Aono T."/>
            <person name="Liu C.T."/>
            <person name="Suzuki S."/>
            <person name="Suzuki T."/>
            <person name="Kaneko T."/>
            <person name="Yamada M."/>
            <person name="Tabata S."/>
            <person name="Kupfer D.M."/>
            <person name="Najar F.Z."/>
            <person name="Wiley G.B."/>
            <person name="Roe B."/>
            <person name="Binnewies T."/>
            <person name="Ussery D."/>
            <person name="Vereecke D."/>
            <person name="Gevers D."/>
            <person name="Holsters M."/>
            <person name="Oyaizu H."/>
        </authorList>
    </citation>
    <scope>NUCLEOTIDE SEQUENCE [LARGE SCALE GENOMIC DNA]</scope>
    <source>
        <strain>ATCC 43989 / DSM 5975 / JCM 20966 / LMG 6465 / NBRC 14845 / NCIMB 13405 / ORS 571</strain>
    </source>
</reference>